<gene>
    <name type="primary">NR2C2AP</name>
    <name type="synonym">TRA16</name>
</gene>
<organism>
    <name type="scientific">Bos taurus</name>
    <name type="common">Bovine</name>
    <dbReference type="NCBI Taxonomy" id="9913"/>
    <lineage>
        <taxon>Eukaryota</taxon>
        <taxon>Metazoa</taxon>
        <taxon>Chordata</taxon>
        <taxon>Craniata</taxon>
        <taxon>Vertebrata</taxon>
        <taxon>Euteleostomi</taxon>
        <taxon>Mammalia</taxon>
        <taxon>Eutheria</taxon>
        <taxon>Laurasiatheria</taxon>
        <taxon>Artiodactyla</taxon>
        <taxon>Ruminantia</taxon>
        <taxon>Pecora</taxon>
        <taxon>Bovidae</taxon>
        <taxon>Bovinae</taxon>
        <taxon>Bos</taxon>
    </lineage>
</organism>
<protein>
    <recommendedName>
        <fullName>Nuclear receptor 2C2-associated protein</fullName>
    </recommendedName>
    <alternativeName>
        <fullName>TR4 orphan receptor-associated 16 kDa protein</fullName>
    </alternativeName>
</protein>
<keyword id="KW-0539">Nucleus</keyword>
<keyword id="KW-1185">Reference proteome</keyword>
<evidence type="ECO:0000250" key="1"/>
<evidence type="ECO:0000305" key="2"/>
<name>NR2CA_BOVIN</name>
<accession>Q58DU8</accession>
<dbReference type="EMBL" id="BT021499">
    <property type="protein sequence ID" value="AAX46346.1"/>
    <property type="molecule type" value="mRNA"/>
</dbReference>
<dbReference type="RefSeq" id="NP_001029499.1">
    <property type="nucleotide sequence ID" value="NM_001034327.1"/>
</dbReference>
<dbReference type="RefSeq" id="XP_005208498.1">
    <property type="nucleotide sequence ID" value="XM_005208441.4"/>
</dbReference>
<dbReference type="SMR" id="Q58DU8"/>
<dbReference type="FunCoup" id="Q58DU8">
    <property type="interactions" value="1293"/>
</dbReference>
<dbReference type="STRING" id="9913.ENSBTAP00000002311"/>
<dbReference type="PaxDb" id="9913-ENSBTAP00000002311"/>
<dbReference type="Ensembl" id="ENSBTAT00000002311.4">
    <property type="protein sequence ID" value="ENSBTAP00000002311.3"/>
    <property type="gene ID" value="ENSBTAG00000001763.7"/>
</dbReference>
<dbReference type="GeneID" id="508684"/>
<dbReference type="KEGG" id="bta:508684"/>
<dbReference type="CTD" id="126382"/>
<dbReference type="VEuPathDB" id="HostDB:ENSBTAG00000001763"/>
<dbReference type="VGNC" id="VGNC:32237">
    <property type="gene designation" value="NR2C2AP"/>
</dbReference>
<dbReference type="eggNOG" id="ENOG502RZAY">
    <property type="taxonomic scope" value="Eukaryota"/>
</dbReference>
<dbReference type="GeneTree" id="ENSGT00390000017748"/>
<dbReference type="HOGENOM" id="CLU_133965_0_0_1"/>
<dbReference type="InParanoid" id="Q58DU8"/>
<dbReference type="OMA" id="FFGRITV"/>
<dbReference type="OrthoDB" id="10052260at2759"/>
<dbReference type="TreeFam" id="TF300180"/>
<dbReference type="Proteomes" id="UP000009136">
    <property type="component" value="Chromosome 7"/>
</dbReference>
<dbReference type="Bgee" id="ENSBTAG00000001763">
    <property type="expression patterns" value="Expressed in esophagus and 106 other cell types or tissues"/>
</dbReference>
<dbReference type="GO" id="GO:0005654">
    <property type="term" value="C:nucleoplasm"/>
    <property type="evidence" value="ECO:0007669"/>
    <property type="project" value="Ensembl"/>
</dbReference>
<dbReference type="FunFam" id="2.60.120.260:FF:000070">
    <property type="entry name" value="Nuclear receptor 2C2-associated protein"/>
    <property type="match status" value="1"/>
</dbReference>
<dbReference type="Gene3D" id="2.60.120.260">
    <property type="entry name" value="Galactose-binding domain-like"/>
    <property type="match status" value="1"/>
</dbReference>
<dbReference type="InterPro" id="IPR008979">
    <property type="entry name" value="Galactose-bd-like_sf"/>
</dbReference>
<dbReference type="SUPFAM" id="SSF49785">
    <property type="entry name" value="Galactose-binding domain-like"/>
    <property type="match status" value="1"/>
</dbReference>
<reference key="1">
    <citation type="journal article" date="2005" name="BMC Genomics">
        <title>Characterization of 954 bovine full-CDS cDNA sequences.</title>
        <authorList>
            <person name="Harhay G.P."/>
            <person name="Sonstegard T.S."/>
            <person name="Keele J.W."/>
            <person name="Heaton M.P."/>
            <person name="Clawson M.L."/>
            <person name="Snelling W.M."/>
            <person name="Wiedmann R.T."/>
            <person name="Van Tassell C.P."/>
            <person name="Smith T.P.L."/>
        </authorList>
    </citation>
    <scope>NUCLEOTIDE SEQUENCE [LARGE SCALE MRNA]</scope>
</reference>
<proteinExistence type="evidence at transcript level"/>
<comment type="function">
    <text evidence="1">May act as a repressor of NR2C2-mediated transactivation by suppressing the binding between NR2C2/TR4 and the TR4-response element in target genes.</text>
</comment>
<comment type="subunit">
    <text evidence="1">Interacts with NR2C2/TR4.</text>
</comment>
<comment type="subcellular location">
    <subcellularLocation>
        <location evidence="1">Nucleus</location>
    </subcellularLocation>
</comment>
<comment type="similarity">
    <text evidence="2">Belongs to the NR2C2AP family.</text>
</comment>
<feature type="chain" id="PRO_0000295584" description="Nuclear receptor 2C2-associated protein">
    <location>
        <begin position="1"/>
        <end position="140"/>
    </location>
</feature>
<sequence>MAHSLVCPETVSRVSSVLNRNTRQFGKKHLFDQDEETCWNSDQGPSQWVTLEFPQCICVSQLQIQFQGGFSSRQGRLEGSLGSEALSKIVDFYPEDNNSLQTFPVPPAEVDRLKVTFEDTTDFFGRVVIYHLRVLGKKKE</sequence>